<organism>
    <name type="scientific">Ictalurus punctatus</name>
    <name type="common">Channel catfish</name>
    <name type="synonym">Silurus punctatus</name>
    <dbReference type="NCBI Taxonomy" id="7998"/>
    <lineage>
        <taxon>Eukaryota</taxon>
        <taxon>Metazoa</taxon>
        <taxon>Chordata</taxon>
        <taxon>Craniata</taxon>
        <taxon>Vertebrata</taxon>
        <taxon>Euteleostomi</taxon>
        <taxon>Actinopterygii</taxon>
        <taxon>Neopterygii</taxon>
        <taxon>Teleostei</taxon>
        <taxon>Ostariophysi</taxon>
        <taxon>Siluriformes</taxon>
        <taxon>Ictaluridae</taxon>
        <taxon>Ictalurus</taxon>
    </lineage>
</organism>
<name>S10I_ICTPU</name>
<sequence>MSDLQKGMALLISTFHKYSGKEGDKCTLTKGELKDLLTKELGGAFGNCSDQATLDKIFKDLDTNADGVVDFQEYATMVACTTMLCNKSLSKK</sequence>
<evidence type="ECO:0000255" key="1">
    <source>
        <dbReference type="PROSITE-ProRule" id="PRU00448"/>
    </source>
</evidence>
<evidence type="ECO:0000305" key="2"/>
<accession>Q91061</accession>
<protein>
    <recommendedName>
        <fullName>Ictacalcin</fullName>
    </recommendedName>
</protein>
<keyword id="KW-0106">Calcium</keyword>
<keyword id="KW-0479">Metal-binding</keyword>
<keyword id="KW-0677">Repeat</keyword>
<feature type="chain" id="PRO_0000144034" description="Ictacalcin">
    <location>
        <begin position="1"/>
        <end position="92"/>
    </location>
</feature>
<feature type="domain" description="EF-hand 1" evidence="2">
    <location>
        <begin position="12"/>
        <end position="47"/>
    </location>
</feature>
<feature type="domain" description="EF-hand 2" evidence="1">
    <location>
        <begin position="49"/>
        <end position="84"/>
    </location>
</feature>
<feature type="binding site" evidence="2">
    <location>
        <position position="27"/>
    </location>
    <ligand>
        <name>Ca(2+)</name>
        <dbReference type="ChEBI" id="CHEBI:29108"/>
        <label>1</label>
        <note>low affinity</note>
    </ligand>
</feature>
<feature type="binding site" evidence="2">
    <location>
        <position position="32"/>
    </location>
    <ligand>
        <name>Ca(2+)</name>
        <dbReference type="ChEBI" id="CHEBI:29108"/>
        <label>1</label>
        <note>low affinity</note>
    </ligand>
</feature>
<feature type="binding site" evidence="1">
    <location>
        <position position="62"/>
    </location>
    <ligand>
        <name>Ca(2+)</name>
        <dbReference type="ChEBI" id="CHEBI:29108"/>
        <label>2</label>
        <note>high affinity</note>
    </ligand>
</feature>
<feature type="binding site" evidence="1">
    <location>
        <position position="64"/>
    </location>
    <ligand>
        <name>Ca(2+)</name>
        <dbReference type="ChEBI" id="CHEBI:29108"/>
        <label>2</label>
        <note>high affinity</note>
    </ligand>
</feature>
<feature type="binding site" evidence="1">
    <location>
        <position position="66"/>
    </location>
    <ligand>
        <name>Ca(2+)</name>
        <dbReference type="ChEBI" id="CHEBI:29108"/>
        <label>2</label>
        <note>high affinity</note>
    </ligand>
</feature>
<feature type="binding site" evidence="1">
    <location>
        <position position="73"/>
    </location>
    <ligand>
        <name>Ca(2+)</name>
        <dbReference type="ChEBI" id="CHEBI:29108"/>
        <label>2</label>
        <note>high affinity</note>
    </ligand>
</feature>
<dbReference type="EMBL" id="U33273">
    <property type="protein sequence ID" value="AAB52610.1"/>
    <property type="molecule type" value="mRNA"/>
</dbReference>
<dbReference type="RefSeq" id="NP_001187203.1">
    <property type="nucleotide sequence ID" value="NM_001200274.1"/>
</dbReference>
<dbReference type="RefSeq" id="XP_017323574.1">
    <property type="nucleotide sequence ID" value="XM_017468085.3"/>
</dbReference>
<dbReference type="SMR" id="Q91061"/>
<dbReference type="STRING" id="7998.ENSIPUP00000004927"/>
<dbReference type="Ensembl" id="ENSIPUT00015021492">
    <property type="protein sequence ID" value="ENSIPUP00015016705"/>
    <property type="gene ID" value="ENSIPUG00015010473"/>
</dbReference>
<dbReference type="GeneID" id="100305037"/>
<dbReference type="GeneID" id="108265573"/>
<dbReference type="KEGG" id="ipu:100305037"/>
<dbReference type="KEGG" id="ipu:108265573"/>
<dbReference type="OrthoDB" id="8881129at2759"/>
<dbReference type="Proteomes" id="UP000221080">
    <property type="component" value="Chromosome 1"/>
</dbReference>
<dbReference type="GO" id="GO:0005737">
    <property type="term" value="C:cytoplasm"/>
    <property type="evidence" value="ECO:0007669"/>
    <property type="project" value="TreeGrafter"/>
</dbReference>
<dbReference type="GO" id="GO:0005509">
    <property type="term" value="F:calcium ion binding"/>
    <property type="evidence" value="ECO:0000314"/>
    <property type="project" value="AgBase"/>
</dbReference>
<dbReference type="GO" id="GO:0048306">
    <property type="term" value="F:calcium-dependent protein binding"/>
    <property type="evidence" value="ECO:0007669"/>
    <property type="project" value="TreeGrafter"/>
</dbReference>
<dbReference type="GO" id="GO:0046914">
    <property type="term" value="F:transition metal ion binding"/>
    <property type="evidence" value="ECO:0007669"/>
    <property type="project" value="InterPro"/>
</dbReference>
<dbReference type="CDD" id="cd00213">
    <property type="entry name" value="S-100"/>
    <property type="match status" value="1"/>
</dbReference>
<dbReference type="FunFam" id="1.10.238.10:FF:000044">
    <property type="entry name" value="Protein S100"/>
    <property type="match status" value="1"/>
</dbReference>
<dbReference type="Gene3D" id="1.10.238.10">
    <property type="entry name" value="EF-hand"/>
    <property type="match status" value="1"/>
</dbReference>
<dbReference type="InterPro" id="IPR011992">
    <property type="entry name" value="EF-hand-dom_pair"/>
</dbReference>
<dbReference type="InterPro" id="IPR018247">
    <property type="entry name" value="EF_Hand_1_Ca_BS"/>
</dbReference>
<dbReference type="InterPro" id="IPR002048">
    <property type="entry name" value="EF_hand_dom"/>
</dbReference>
<dbReference type="InterPro" id="IPR034325">
    <property type="entry name" value="S-100_dom"/>
</dbReference>
<dbReference type="InterPro" id="IPR001751">
    <property type="entry name" value="S100/CaBP7/8-like_CS"/>
</dbReference>
<dbReference type="InterPro" id="IPR013787">
    <property type="entry name" value="S100_Ca-bd_sub"/>
</dbReference>
<dbReference type="PANTHER" id="PTHR11639:SF118">
    <property type="entry name" value="PROTEIN S100"/>
    <property type="match status" value="1"/>
</dbReference>
<dbReference type="PANTHER" id="PTHR11639">
    <property type="entry name" value="S100 CALCIUM-BINDING PROTEIN"/>
    <property type="match status" value="1"/>
</dbReference>
<dbReference type="Pfam" id="PF00036">
    <property type="entry name" value="EF-hand_1"/>
    <property type="match status" value="1"/>
</dbReference>
<dbReference type="Pfam" id="PF01023">
    <property type="entry name" value="S_100"/>
    <property type="match status" value="1"/>
</dbReference>
<dbReference type="SMART" id="SM00054">
    <property type="entry name" value="EFh"/>
    <property type="match status" value="1"/>
</dbReference>
<dbReference type="SMART" id="SM01394">
    <property type="entry name" value="S_100"/>
    <property type="match status" value="1"/>
</dbReference>
<dbReference type="SUPFAM" id="SSF47473">
    <property type="entry name" value="EF-hand"/>
    <property type="match status" value="1"/>
</dbReference>
<dbReference type="PROSITE" id="PS00018">
    <property type="entry name" value="EF_HAND_1"/>
    <property type="match status" value="1"/>
</dbReference>
<dbReference type="PROSITE" id="PS50222">
    <property type="entry name" value="EF_HAND_2"/>
    <property type="match status" value="1"/>
</dbReference>
<dbReference type="PROSITE" id="PS00303">
    <property type="entry name" value="S100_CABP"/>
    <property type="match status" value="1"/>
</dbReference>
<proteinExistence type="evidence at transcript level"/>
<reference key="1">
    <citation type="journal article" date="1996" name="Brain Res. Mol. Brain Res.">
        <title>Molecular cloning of ictacalcin: a novel calcium-binding protein from the channel catfish, Ictalurus punctatus.</title>
        <authorList>
            <person name="Porta A.R."/>
            <person name="Bettini E."/>
            <person name="Buiakova O.I."/>
            <person name="Baker H."/>
            <person name="Danho W."/>
            <person name="Margolis F.L."/>
        </authorList>
    </citation>
    <scope>NUCLEOTIDE SEQUENCE [MRNA]</scope>
    <source>
        <tissue>Olfactory epithelium</tissue>
    </source>
</reference>
<comment type="function">
    <text>Plays an important role in catfish calcium homeostasis.</text>
</comment>
<comment type="tissue specificity">
    <text>Abundant in epithelial cells of olfactory rosette, barbel, skin and gill but not brain or muscle.</text>
</comment>
<comment type="similarity">
    <text evidence="2">Belongs to the S-100 family.</text>
</comment>